<keyword id="KW-1185">Reference proteome</keyword>
<keyword id="KW-0687">Ribonucleoprotein</keyword>
<keyword id="KW-0689">Ribosomal protein</keyword>
<keyword id="KW-0694">RNA-binding</keyword>
<keyword id="KW-0699">rRNA-binding</keyword>
<feature type="chain" id="PRO_1000086348" description="Large ribosomal subunit protein uL2">
    <location>
        <begin position="1"/>
        <end position="273"/>
    </location>
</feature>
<feature type="region of interest" description="Disordered" evidence="2">
    <location>
        <begin position="28"/>
        <end position="53"/>
    </location>
</feature>
<feature type="region of interest" description="Disordered" evidence="2">
    <location>
        <begin position="221"/>
        <end position="273"/>
    </location>
</feature>
<feature type="compositionally biased region" description="Low complexity" evidence="2">
    <location>
        <begin position="39"/>
        <end position="48"/>
    </location>
</feature>
<evidence type="ECO:0000255" key="1">
    <source>
        <dbReference type="HAMAP-Rule" id="MF_01320"/>
    </source>
</evidence>
<evidence type="ECO:0000256" key="2">
    <source>
        <dbReference type="SAM" id="MobiDB-lite"/>
    </source>
</evidence>
<evidence type="ECO:0000305" key="3"/>
<gene>
    <name evidence="1" type="primary">rplB</name>
    <name type="ordered locus">SARI_04191</name>
</gene>
<name>RL2_SALAR</name>
<organism>
    <name type="scientific">Salmonella arizonae (strain ATCC BAA-731 / CDC346-86 / RSK2980)</name>
    <dbReference type="NCBI Taxonomy" id="41514"/>
    <lineage>
        <taxon>Bacteria</taxon>
        <taxon>Pseudomonadati</taxon>
        <taxon>Pseudomonadota</taxon>
        <taxon>Gammaproteobacteria</taxon>
        <taxon>Enterobacterales</taxon>
        <taxon>Enterobacteriaceae</taxon>
        <taxon>Salmonella</taxon>
    </lineage>
</organism>
<protein>
    <recommendedName>
        <fullName evidence="1">Large ribosomal subunit protein uL2</fullName>
    </recommendedName>
    <alternativeName>
        <fullName evidence="3">50S ribosomal protein L2</fullName>
    </alternativeName>
</protein>
<proteinExistence type="inferred from homology"/>
<sequence>MAVVKCKPTSPGRRHVVKVVNPELHKGKPFAPLVEKNSKSGGRNNNGRITTRHIGGGHKQAYRIVDFKRNKDGIPAVVERLEYDPNRSANIALVLYKDGERRYILAPKGLKAGDQIQSGVDAAIKAGNTLPMRNIPVGSTVHNVEMKPGKGGQLARSAGTYVQIVARDGAYVTLRLRSGEMRKVEADCRATLGEVGNAEHMLRVLGKAGAARWRGVRPTVRGTAMNPVDHPHGGGEGRNFGKHPVTPWGVQTKGKKTRSNKRTDKFIVRRRSK</sequence>
<accession>A9MN51</accession>
<dbReference type="EMBL" id="CP000880">
    <property type="protein sequence ID" value="ABX23980.1"/>
    <property type="molecule type" value="Genomic_DNA"/>
</dbReference>
<dbReference type="SMR" id="A9MN51"/>
<dbReference type="STRING" id="41514.SARI_04191"/>
<dbReference type="KEGG" id="ses:SARI_04191"/>
<dbReference type="HOGENOM" id="CLU_036235_2_1_6"/>
<dbReference type="Proteomes" id="UP000002084">
    <property type="component" value="Chromosome"/>
</dbReference>
<dbReference type="GO" id="GO:0005829">
    <property type="term" value="C:cytosol"/>
    <property type="evidence" value="ECO:0007669"/>
    <property type="project" value="UniProtKB-ARBA"/>
</dbReference>
<dbReference type="GO" id="GO:0015934">
    <property type="term" value="C:large ribosomal subunit"/>
    <property type="evidence" value="ECO:0007669"/>
    <property type="project" value="InterPro"/>
</dbReference>
<dbReference type="GO" id="GO:0019843">
    <property type="term" value="F:rRNA binding"/>
    <property type="evidence" value="ECO:0007669"/>
    <property type="project" value="UniProtKB-UniRule"/>
</dbReference>
<dbReference type="GO" id="GO:0003735">
    <property type="term" value="F:structural constituent of ribosome"/>
    <property type="evidence" value="ECO:0007669"/>
    <property type="project" value="InterPro"/>
</dbReference>
<dbReference type="GO" id="GO:0016740">
    <property type="term" value="F:transferase activity"/>
    <property type="evidence" value="ECO:0007669"/>
    <property type="project" value="InterPro"/>
</dbReference>
<dbReference type="GO" id="GO:0002181">
    <property type="term" value="P:cytoplasmic translation"/>
    <property type="evidence" value="ECO:0007669"/>
    <property type="project" value="TreeGrafter"/>
</dbReference>
<dbReference type="FunFam" id="2.30.30.30:FF:000001">
    <property type="entry name" value="50S ribosomal protein L2"/>
    <property type="match status" value="1"/>
</dbReference>
<dbReference type="FunFam" id="2.40.50.140:FF:000003">
    <property type="entry name" value="50S ribosomal protein L2"/>
    <property type="match status" value="1"/>
</dbReference>
<dbReference type="FunFam" id="4.10.950.10:FF:000001">
    <property type="entry name" value="50S ribosomal protein L2"/>
    <property type="match status" value="1"/>
</dbReference>
<dbReference type="Gene3D" id="2.30.30.30">
    <property type="match status" value="1"/>
</dbReference>
<dbReference type="Gene3D" id="2.40.50.140">
    <property type="entry name" value="Nucleic acid-binding proteins"/>
    <property type="match status" value="1"/>
</dbReference>
<dbReference type="Gene3D" id="4.10.950.10">
    <property type="entry name" value="Ribosomal protein L2, domain 3"/>
    <property type="match status" value="1"/>
</dbReference>
<dbReference type="HAMAP" id="MF_01320_B">
    <property type="entry name" value="Ribosomal_uL2_B"/>
    <property type="match status" value="1"/>
</dbReference>
<dbReference type="InterPro" id="IPR012340">
    <property type="entry name" value="NA-bd_OB-fold"/>
</dbReference>
<dbReference type="InterPro" id="IPR014722">
    <property type="entry name" value="Rib_uL2_dom2"/>
</dbReference>
<dbReference type="InterPro" id="IPR002171">
    <property type="entry name" value="Ribosomal_uL2"/>
</dbReference>
<dbReference type="InterPro" id="IPR005880">
    <property type="entry name" value="Ribosomal_uL2_bac/org-type"/>
</dbReference>
<dbReference type="InterPro" id="IPR022669">
    <property type="entry name" value="Ribosomal_uL2_C"/>
</dbReference>
<dbReference type="InterPro" id="IPR022671">
    <property type="entry name" value="Ribosomal_uL2_CS"/>
</dbReference>
<dbReference type="InterPro" id="IPR014726">
    <property type="entry name" value="Ribosomal_uL2_dom3"/>
</dbReference>
<dbReference type="InterPro" id="IPR022666">
    <property type="entry name" value="Ribosomal_uL2_RNA-bd_dom"/>
</dbReference>
<dbReference type="InterPro" id="IPR008991">
    <property type="entry name" value="Translation_prot_SH3-like_sf"/>
</dbReference>
<dbReference type="NCBIfam" id="TIGR01171">
    <property type="entry name" value="rplB_bact"/>
    <property type="match status" value="1"/>
</dbReference>
<dbReference type="PANTHER" id="PTHR13691:SF5">
    <property type="entry name" value="LARGE RIBOSOMAL SUBUNIT PROTEIN UL2M"/>
    <property type="match status" value="1"/>
</dbReference>
<dbReference type="PANTHER" id="PTHR13691">
    <property type="entry name" value="RIBOSOMAL PROTEIN L2"/>
    <property type="match status" value="1"/>
</dbReference>
<dbReference type="Pfam" id="PF00181">
    <property type="entry name" value="Ribosomal_L2"/>
    <property type="match status" value="1"/>
</dbReference>
<dbReference type="Pfam" id="PF03947">
    <property type="entry name" value="Ribosomal_L2_C"/>
    <property type="match status" value="1"/>
</dbReference>
<dbReference type="PIRSF" id="PIRSF002158">
    <property type="entry name" value="Ribosomal_L2"/>
    <property type="match status" value="1"/>
</dbReference>
<dbReference type="SMART" id="SM01383">
    <property type="entry name" value="Ribosomal_L2"/>
    <property type="match status" value="1"/>
</dbReference>
<dbReference type="SMART" id="SM01382">
    <property type="entry name" value="Ribosomal_L2_C"/>
    <property type="match status" value="1"/>
</dbReference>
<dbReference type="SUPFAM" id="SSF50249">
    <property type="entry name" value="Nucleic acid-binding proteins"/>
    <property type="match status" value="1"/>
</dbReference>
<dbReference type="SUPFAM" id="SSF50104">
    <property type="entry name" value="Translation proteins SH3-like domain"/>
    <property type="match status" value="1"/>
</dbReference>
<dbReference type="PROSITE" id="PS00467">
    <property type="entry name" value="RIBOSOMAL_L2"/>
    <property type="match status" value="1"/>
</dbReference>
<comment type="function">
    <text evidence="1">One of the primary rRNA binding proteins. Required for association of the 30S and 50S subunits to form the 70S ribosome, for tRNA binding and peptide bond formation. It has been suggested to have peptidyltransferase activity; this is somewhat controversial. Makes several contacts with the 16S rRNA in the 70S ribosome.</text>
</comment>
<comment type="subunit">
    <text evidence="1">Part of the 50S ribosomal subunit. Forms a bridge to the 30S subunit in the 70S ribosome.</text>
</comment>
<comment type="similarity">
    <text evidence="1">Belongs to the universal ribosomal protein uL2 family.</text>
</comment>
<reference key="1">
    <citation type="submission" date="2007-11" db="EMBL/GenBank/DDBJ databases">
        <authorList>
            <consortium name="The Salmonella enterica serovar Arizonae Genome Sequencing Project"/>
            <person name="McClelland M."/>
            <person name="Sanderson E.K."/>
            <person name="Porwollik S."/>
            <person name="Spieth J."/>
            <person name="Clifton W.S."/>
            <person name="Fulton R."/>
            <person name="Chunyan W."/>
            <person name="Wollam A."/>
            <person name="Shah N."/>
            <person name="Pepin K."/>
            <person name="Bhonagiri V."/>
            <person name="Nash W."/>
            <person name="Johnson M."/>
            <person name="Thiruvilangam P."/>
            <person name="Wilson R."/>
        </authorList>
    </citation>
    <scope>NUCLEOTIDE SEQUENCE [LARGE SCALE GENOMIC DNA]</scope>
    <source>
        <strain>ATCC BAA-731 / CDC346-86 / RSK2980</strain>
    </source>
</reference>